<keyword id="KW-0002">3D-structure</keyword>
<keyword id="KW-1185">Reference proteome</keyword>
<protein>
    <recommendedName>
        <fullName>Uncharacterized beta-barrel protein YwiB</fullName>
    </recommendedName>
</protein>
<feature type="chain" id="PRO_0000359929" description="Uncharacterized beta-barrel protein YwiB">
    <location>
        <begin position="1"/>
        <end position="142"/>
    </location>
</feature>
<feature type="strand" evidence="3">
    <location>
        <begin position="2"/>
        <end position="17"/>
    </location>
</feature>
<feature type="strand" evidence="3">
    <location>
        <begin position="20"/>
        <end position="35"/>
    </location>
</feature>
<feature type="strand" evidence="3">
    <location>
        <begin position="38"/>
        <end position="47"/>
    </location>
</feature>
<feature type="strand" evidence="3">
    <location>
        <begin position="50"/>
        <end position="59"/>
    </location>
</feature>
<feature type="strand" evidence="3">
    <location>
        <begin position="62"/>
        <end position="78"/>
    </location>
</feature>
<feature type="strand" evidence="3">
    <location>
        <begin position="82"/>
        <end position="89"/>
    </location>
</feature>
<feature type="strand" evidence="3">
    <location>
        <begin position="92"/>
        <end position="107"/>
    </location>
</feature>
<feature type="strand" evidence="3">
    <location>
        <begin position="109"/>
        <end position="121"/>
    </location>
</feature>
<feature type="strand" evidence="3">
    <location>
        <begin position="129"/>
        <end position="138"/>
    </location>
</feature>
<dbReference type="EMBL" id="Z97024">
    <property type="protein sequence ID" value="CAB09702.1"/>
    <property type="molecule type" value="Genomic_DNA"/>
</dbReference>
<dbReference type="EMBL" id="AL009126">
    <property type="protein sequence ID" value="CAB15762.1"/>
    <property type="molecule type" value="Genomic_DNA"/>
</dbReference>
<dbReference type="PIR" id="C70059">
    <property type="entry name" value="C70059"/>
</dbReference>
<dbReference type="RefSeq" id="NP_391615.1">
    <property type="nucleotide sequence ID" value="NC_000964.3"/>
</dbReference>
<dbReference type="RefSeq" id="WP_003243604.1">
    <property type="nucleotide sequence ID" value="NZ_OZ025638.1"/>
</dbReference>
<dbReference type="PDB" id="1R0U">
    <property type="method" value="X-ray"/>
    <property type="resolution" value="1.75 A"/>
    <property type="chains" value="A=1-142"/>
</dbReference>
<dbReference type="PDBsum" id="1R0U"/>
<dbReference type="SMR" id="O07624"/>
<dbReference type="FunCoup" id="O07624">
    <property type="interactions" value="77"/>
</dbReference>
<dbReference type="STRING" id="224308.BSU37340"/>
<dbReference type="PaxDb" id="224308-BSU37340"/>
<dbReference type="EnsemblBacteria" id="CAB15762">
    <property type="protein sequence ID" value="CAB15762"/>
    <property type="gene ID" value="BSU_37340"/>
</dbReference>
<dbReference type="GeneID" id="937056"/>
<dbReference type="KEGG" id="bsu:BSU37340"/>
<dbReference type="PATRIC" id="fig|224308.179.peg.4045"/>
<dbReference type="eggNOG" id="COG4506">
    <property type="taxonomic scope" value="Bacteria"/>
</dbReference>
<dbReference type="InParanoid" id="O07624"/>
<dbReference type="OrthoDB" id="2352933at2"/>
<dbReference type="PhylomeDB" id="O07624"/>
<dbReference type="BioCyc" id="BSUB:BSU37340-MONOMER"/>
<dbReference type="EvolutionaryTrace" id="O07624"/>
<dbReference type="Proteomes" id="UP000001570">
    <property type="component" value="Chromosome"/>
</dbReference>
<dbReference type="Gene3D" id="2.40.128.20">
    <property type="match status" value="1"/>
</dbReference>
<dbReference type="InterPro" id="IPR012674">
    <property type="entry name" value="Calycin"/>
</dbReference>
<dbReference type="InterPro" id="IPR015231">
    <property type="entry name" value="DUF1934"/>
</dbReference>
<dbReference type="Pfam" id="PF09148">
    <property type="entry name" value="DUF1934"/>
    <property type="match status" value="1"/>
</dbReference>
<dbReference type="SUPFAM" id="SSF50814">
    <property type="entry name" value="Lipocalins"/>
    <property type="match status" value="1"/>
</dbReference>
<name>YWIB_BACSU</name>
<reference key="1">
    <citation type="journal article" date="1997" name="Microbiology">
        <title>The Bacillus subtilis genome from gerBC (311 degrees) to licR (334 degrees).</title>
        <authorList>
            <person name="Presecan E."/>
            <person name="Moszer I."/>
            <person name="Boursier L."/>
            <person name="Cruz Ramos H."/>
            <person name="De La Fuente V."/>
            <person name="Hullo M.-F."/>
            <person name="Lelong C."/>
            <person name="Schleich S."/>
            <person name="Sekowska A."/>
            <person name="Song B.H."/>
            <person name="Villani G."/>
            <person name="Kunst F."/>
            <person name="Danchin A."/>
            <person name="Glaser P."/>
        </authorList>
    </citation>
    <scope>NUCLEOTIDE SEQUENCE [GENOMIC DNA]</scope>
    <source>
        <strain>168</strain>
    </source>
</reference>
<reference key="2">
    <citation type="journal article" date="1997" name="Nature">
        <title>The complete genome sequence of the Gram-positive bacterium Bacillus subtilis.</title>
        <authorList>
            <person name="Kunst F."/>
            <person name="Ogasawara N."/>
            <person name="Moszer I."/>
            <person name="Albertini A.M."/>
            <person name="Alloni G."/>
            <person name="Azevedo V."/>
            <person name="Bertero M.G."/>
            <person name="Bessieres P."/>
            <person name="Bolotin A."/>
            <person name="Borchert S."/>
            <person name="Borriss R."/>
            <person name="Boursier L."/>
            <person name="Brans A."/>
            <person name="Braun M."/>
            <person name="Brignell S.C."/>
            <person name="Bron S."/>
            <person name="Brouillet S."/>
            <person name="Bruschi C.V."/>
            <person name="Caldwell B."/>
            <person name="Capuano V."/>
            <person name="Carter N.M."/>
            <person name="Choi S.-K."/>
            <person name="Codani J.-J."/>
            <person name="Connerton I.F."/>
            <person name="Cummings N.J."/>
            <person name="Daniel R.A."/>
            <person name="Denizot F."/>
            <person name="Devine K.M."/>
            <person name="Duesterhoeft A."/>
            <person name="Ehrlich S.D."/>
            <person name="Emmerson P.T."/>
            <person name="Entian K.-D."/>
            <person name="Errington J."/>
            <person name="Fabret C."/>
            <person name="Ferrari E."/>
            <person name="Foulger D."/>
            <person name="Fritz C."/>
            <person name="Fujita M."/>
            <person name="Fujita Y."/>
            <person name="Fuma S."/>
            <person name="Galizzi A."/>
            <person name="Galleron N."/>
            <person name="Ghim S.-Y."/>
            <person name="Glaser P."/>
            <person name="Goffeau A."/>
            <person name="Golightly E.J."/>
            <person name="Grandi G."/>
            <person name="Guiseppi G."/>
            <person name="Guy B.J."/>
            <person name="Haga K."/>
            <person name="Haiech J."/>
            <person name="Harwood C.R."/>
            <person name="Henaut A."/>
            <person name="Hilbert H."/>
            <person name="Holsappel S."/>
            <person name="Hosono S."/>
            <person name="Hullo M.-F."/>
            <person name="Itaya M."/>
            <person name="Jones L.-M."/>
            <person name="Joris B."/>
            <person name="Karamata D."/>
            <person name="Kasahara Y."/>
            <person name="Klaerr-Blanchard M."/>
            <person name="Klein C."/>
            <person name="Kobayashi Y."/>
            <person name="Koetter P."/>
            <person name="Koningstein G."/>
            <person name="Krogh S."/>
            <person name="Kumano M."/>
            <person name="Kurita K."/>
            <person name="Lapidus A."/>
            <person name="Lardinois S."/>
            <person name="Lauber J."/>
            <person name="Lazarevic V."/>
            <person name="Lee S.-M."/>
            <person name="Levine A."/>
            <person name="Liu H."/>
            <person name="Masuda S."/>
            <person name="Mauel C."/>
            <person name="Medigue C."/>
            <person name="Medina N."/>
            <person name="Mellado R.P."/>
            <person name="Mizuno M."/>
            <person name="Moestl D."/>
            <person name="Nakai S."/>
            <person name="Noback M."/>
            <person name="Noone D."/>
            <person name="O'Reilly M."/>
            <person name="Ogawa K."/>
            <person name="Ogiwara A."/>
            <person name="Oudega B."/>
            <person name="Park S.-H."/>
            <person name="Parro V."/>
            <person name="Pohl T.M."/>
            <person name="Portetelle D."/>
            <person name="Porwollik S."/>
            <person name="Prescott A.M."/>
            <person name="Presecan E."/>
            <person name="Pujic P."/>
            <person name="Purnelle B."/>
            <person name="Rapoport G."/>
            <person name="Rey M."/>
            <person name="Reynolds S."/>
            <person name="Rieger M."/>
            <person name="Rivolta C."/>
            <person name="Rocha E."/>
            <person name="Roche B."/>
            <person name="Rose M."/>
            <person name="Sadaie Y."/>
            <person name="Sato T."/>
            <person name="Scanlan E."/>
            <person name="Schleich S."/>
            <person name="Schroeter R."/>
            <person name="Scoffone F."/>
            <person name="Sekiguchi J."/>
            <person name="Sekowska A."/>
            <person name="Seror S.J."/>
            <person name="Serror P."/>
            <person name="Shin B.-S."/>
            <person name="Soldo B."/>
            <person name="Sorokin A."/>
            <person name="Tacconi E."/>
            <person name="Takagi T."/>
            <person name="Takahashi H."/>
            <person name="Takemaru K."/>
            <person name="Takeuchi M."/>
            <person name="Tamakoshi A."/>
            <person name="Tanaka T."/>
            <person name="Terpstra P."/>
            <person name="Tognoni A."/>
            <person name="Tosato V."/>
            <person name="Uchiyama S."/>
            <person name="Vandenbol M."/>
            <person name="Vannier F."/>
            <person name="Vassarotti A."/>
            <person name="Viari A."/>
            <person name="Wambutt R."/>
            <person name="Wedler E."/>
            <person name="Wedler H."/>
            <person name="Weitzenegger T."/>
            <person name="Winters P."/>
            <person name="Wipat A."/>
            <person name="Yamamoto H."/>
            <person name="Yamane K."/>
            <person name="Yasumoto K."/>
            <person name="Yata K."/>
            <person name="Yoshida K."/>
            <person name="Yoshikawa H.-F."/>
            <person name="Zumstein E."/>
            <person name="Yoshikawa H."/>
            <person name="Danchin A."/>
        </authorList>
    </citation>
    <scope>NUCLEOTIDE SEQUENCE [LARGE SCALE GENOMIC DNA]</scope>
    <source>
        <strain>168</strain>
    </source>
</reference>
<reference key="3">
    <citation type="submission" date="2005-01" db="PDB data bank">
        <title>Crystal structure of ywib protein from Bacillus subtilis.</title>
        <authorList>
            <consortium name="Midwest center for structural genomics (MCSG)"/>
        </authorList>
    </citation>
    <scope>X-RAY CRYSTALLOGRAPHY (1.75 ANGSTROMS)</scope>
    <scope>SUBUNIT</scope>
    <scope>DOMAIN</scope>
</reference>
<sequence>MKQETPITLHVKSVIEDDGNQEVIEFRTTGFYYVKQNKVYLSYYEEHDLGKVKTIVKVSEGEVLVMRSGAVKMNQRFVTGASTIAKYKMSFGELELKTSTKSIQSDLDEEKGRISIAYDMHVGDEQEHLHNMTITYEGGTHA</sequence>
<evidence type="ECO:0000269" key="1">
    <source ref="3"/>
</evidence>
<evidence type="ECO:0000305" key="2"/>
<evidence type="ECO:0007829" key="3">
    <source>
        <dbReference type="PDB" id="1R0U"/>
    </source>
</evidence>
<gene>
    <name type="primary">ywiB</name>
    <name type="ordered locus">BSU37340</name>
</gene>
<proteinExistence type="evidence at protein level"/>
<comment type="subunit">
    <text evidence="2">Homodimer.</text>
</comment>
<comment type="domain">
    <text evidence="1">Forms a beta-barrel structure that may accommodate hydrophobic ligands.</text>
</comment>
<organism>
    <name type="scientific">Bacillus subtilis (strain 168)</name>
    <dbReference type="NCBI Taxonomy" id="224308"/>
    <lineage>
        <taxon>Bacteria</taxon>
        <taxon>Bacillati</taxon>
        <taxon>Bacillota</taxon>
        <taxon>Bacilli</taxon>
        <taxon>Bacillales</taxon>
        <taxon>Bacillaceae</taxon>
        <taxon>Bacillus</taxon>
    </lineage>
</organism>
<accession>O07624</accession>
<accession>Q794Z6</accession>